<sequence>MSIEKAKEDFKYLINRGYKKDVALNFVANHYKLSKEDRLKIIRTTHSDKEIKLTKRKLKKLKDFKGKTIYIDGFNVLISLEALIKGNKIVLCDDNIYRDFENVYGKYKINEYSDKAISLLLEILKHYNIKAVIYLDAQVSKSGILAKKIREKMKAFSIEGEVFCVKNCDYELKNKEVVATSDSVIIKSENVKYVVDLIAEAIEYLKKK</sequence>
<organism>
    <name type="scientific">Methanocaldococcus jannaschii (strain ATCC 43067 / DSM 2661 / JAL-1 / JCM 10045 / NBRC 100440)</name>
    <name type="common">Methanococcus jannaschii</name>
    <dbReference type="NCBI Taxonomy" id="243232"/>
    <lineage>
        <taxon>Archaea</taxon>
        <taxon>Methanobacteriati</taxon>
        <taxon>Methanobacteriota</taxon>
        <taxon>Methanomada group</taxon>
        <taxon>Methanococci</taxon>
        <taxon>Methanococcales</taxon>
        <taxon>Methanocaldococcaceae</taxon>
        <taxon>Methanocaldococcus</taxon>
    </lineage>
</organism>
<keyword id="KW-1185">Reference proteome</keyword>
<feature type="chain" id="PRO_0000107112" description="Uncharacterized protein MJ0935">
    <location>
        <begin position="1"/>
        <end position="208"/>
    </location>
</feature>
<accession>Q58345</accession>
<gene>
    <name type="ordered locus">MJ0935</name>
</gene>
<name>Y935_METJA</name>
<dbReference type="EMBL" id="L77117">
    <property type="protein sequence ID" value="AAB98940.1"/>
    <property type="molecule type" value="Genomic_DNA"/>
</dbReference>
<dbReference type="PIR" id="G64416">
    <property type="entry name" value="G64416"/>
</dbReference>
<dbReference type="RefSeq" id="WP_010870449.1">
    <property type="nucleotide sequence ID" value="NC_000909.1"/>
</dbReference>
<dbReference type="STRING" id="243232.MJ_0935"/>
<dbReference type="PaxDb" id="243232-MJ_0935"/>
<dbReference type="EnsemblBacteria" id="AAB98940">
    <property type="protein sequence ID" value="AAB98940"/>
    <property type="gene ID" value="MJ_0935"/>
</dbReference>
<dbReference type="GeneID" id="1451831"/>
<dbReference type="KEGG" id="mja:MJ_0935"/>
<dbReference type="eggNOG" id="arCOG03229">
    <property type="taxonomic scope" value="Archaea"/>
</dbReference>
<dbReference type="HOGENOM" id="CLU_102155_0_0_2"/>
<dbReference type="InParanoid" id="Q58345"/>
<dbReference type="OrthoDB" id="60095at2157"/>
<dbReference type="PhylomeDB" id="Q58345"/>
<dbReference type="Proteomes" id="UP000000805">
    <property type="component" value="Chromosome"/>
</dbReference>
<dbReference type="InterPro" id="IPR007368">
    <property type="entry name" value="DUF434"/>
</dbReference>
<dbReference type="InterPro" id="IPR041652">
    <property type="entry name" value="DUF5616"/>
</dbReference>
<dbReference type="PANTHER" id="PTHR42252:SF1">
    <property type="entry name" value="DUF434 DOMAIN-CONTAINING PROTEIN"/>
    <property type="match status" value="1"/>
</dbReference>
<dbReference type="PANTHER" id="PTHR42252">
    <property type="entry name" value="DUF5616 DOMAIN-CONTAINING PROTEIN"/>
    <property type="match status" value="1"/>
</dbReference>
<dbReference type="Pfam" id="PF04256">
    <property type="entry name" value="DUF434"/>
    <property type="match status" value="1"/>
</dbReference>
<dbReference type="Pfam" id="PF18481">
    <property type="entry name" value="DUF5616"/>
    <property type="match status" value="1"/>
</dbReference>
<proteinExistence type="predicted"/>
<reference key="1">
    <citation type="journal article" date="1996" name="Science">
        <title>Complete genome sequence of the methanogenic archaeon, Methanococcus jannaschii.</title>
        <authorList>
            <person name="Bult C.J."/>
            <person name="White O."/>
            <person name="Olsen G.J."/>
            <person name="Zhou L."/>
            <person name="Fleischmann R.D."/>
            <person name="Sutton G.G."/>
            <person name="Blake J.A."/>
            <person name="FitzGerald L.M."/>
            <person name="Clayton R.A."/>
            <person name="Gocayne J.D."/>
            <person name="Kerlavage A.R."/>
            <person name="Dougherty B.A."/>
            <person name="Tomb J.-F."/>
            <person name="Adams M.D."/>
            <person name="Reich C.I."/>
            <person name="Overbeek R."/>
            <person name="Kirkness E.F."/>
            <person name="Weinstock K.G."/>
            <person name="Merrick J.M."/>
            <person name="Glodek A."/>
            <person name="Scott J.L."/>
            <person name="Geoghagen N.S.M."/>
            <person name="Weidman J.F."/>
            <person name="Fuhrmann J.L."/>
            <person name="Nguyen D."/>
            <person name="Utterback T.R."/>
            <person name="Kelley J.M."/>
            <person name="Peterson J.D."/>
            <person name="Sadow P.W."/>
            <person name="Hanna M.C."/>
            <person name="Cotton M.D."/>
            <person name="Roberts K.M."/>
            <person name="Hurst M.A."/>
            <person name="Kaine B.P."/>
            <person name="Borodovsky M."/>
            <person name="Klenk H.-P."/>
            <person name="Fraser C.M."/>
            <person name="Smith H.O."/>
            <person name="Woese C.R."/>
            <person name="Venter J.C."/>
        </authorList>
    </citation>
    <scope>NUCLEOTIDE SEQUENCE [LARGE SCALE GENOMIC DNA]</scope>
    <source>
        <strain>ATCC 43067 / DSM 2661 / JAL-1 / JCM 10045 / NBRC 100440</strain>
    </source>
</reference>
<protein>
    <recommendedName>
        <fullName>Uncharacterized protein MJ0935</fullName>
    </recommendedName>
</protein>